<organism>
    <name type="scientific">Chlorobium luteolum (strain DSM 273 / BCRC 81028 / 2530)</name>
    <name type="common">Pelodictyon luteolum</name>
    <dbReference type="NCBI Taxonomy" id="319225"/>
    <lineage>
        <taxon>Bacteria</taxon>
        <taxon>Pseudomonadati</taxon>
        <taxon>Chlorobiota</taxon>
        <taxon>Chlorobiia</taxon>
        <taxon>Chlorobiales</taxon>
        <taxon>Chlorobiaceae</taxon>
        <taxon>Chlorobium/Pelodictyon group</taxon>
        <taxon>Pelodictyon</taxon>
    </lineage>
</organism>
<protein>
    <recommendedName>
        <fullName evidence="1">Putative cysteine ligase BshC</fullName>
        <ecNumber evidence="1">6.-.-.-</ecNumber>
    </recommendedName>
</protein>
<comment type="similarity">
    <text evidence="1">Belongs to the BshC family.</text>
</comment>
<keyword id="KW-0175">Coiled coil</keyword>
<keyword id="KW-0436">Ligase</keyword>
<keyword id="KW-1185">Reference proteome</keyword>
<reference key="1">
    <citation type="submission" date="2005-08" db="EMBL/GenBank/DDBJ databases">
        <title>Complete sequence of Pelodictyon luteolum DSM 273.</title>
        <authorList>
            <consortium name="US DOE Joint Genome Institute"/>
            <person name="Copeland A."/>
            <person name="Lucas S."/>
            <person name="Lapidus A."/>
            <person name="Barry K."/>
            <person name="Detter J.C."/>
            <person name="Glavina T."/>
            <person name="Hammon N."/>
            <person name="Israni S."/>
            <person name="Pitluck S."/>
            <person name="Bryant D."/>
            <person name="Schmutz J."/>
            <person name="Larimer F."/>
            <person name="Land M."/>
            <person name="Kyrpides N."/>
            <person name="Ivanova N."/>
            <person name="Richardson P."/>
        </authorList>
    </citation>
    <scope>NUCLEOTIDE SEQUENCE [LARGE SCALE GENOMIC DNA]</scope>
    <source>
        <strain>DSM 273 / BCRC 81028 / 2530</strain>
    </source>
</reference>
<proteinExistence type="inferred from homology"/>
<dbReference type="EC" id="6.-.-.-" evidence="1"/>
<dbReference type="EMBL" id="CP000096">
    <property type="protein sequence ID" value="ABB23248.1"/>
    <property type="molecule type" value="Genomic_DNA"/>
</dbReference>
<dbReference type="RefSeq" id="WP_011357123.1">
    <property type="nucleotide sequence ID" value="NC_007512.1"/>
</dbReference>
<dbReference type="SMR" id="Q3B5Y3"/>
<dbReference type="STRING" id="319225.Plut_0360"/>
<dbReference type="KEGG" id="plt:Plut_0360"/>
<dbReference type="eggNOG" id="COG4365">
    <property type="taxonomic scope" value="Bacteria"/>
</dbReference>
<dbReference type="HOGENOM" id="CLU_022249_1_0_10"/>
<dbReference type="OrthoDB" id="9765151at2"/>
<dbReference type="Proteomes" id="UP000002709">
    <property type="component" value="Chromosome"/>
</dbReference>
<dbReference type="GO" id="GO:0016874">
    <property type="term" value="F:ligase activity"/>
    <property type="evidence" value="ECO:0007669"/>
    <property type="project" value="UniProtKB-UniRule"/>
</dbReference>
<dbReference type="HAMAP" id="MF_01867">
    <property type="entry name" value="BshC"/>
    <property type="match status" value="1"/>
</dbReference>
<dbReference type="InterPro" id="IPR011199">
    <property type="entry name" value="Bacillithiol_biosynth_BshC"/>
</dbReference>
<dbReference type="InterPro" id="IPR055399">
    <property type="entry name" value="CC_BshC"/>
</dbReference>
<dbReference type="InterPro" id="IPR055398">
    <property type="entry name" value="Rossmann-like_BshC"/>
</dbReference>
<dbReference type="NCBIfam" id="TIGR03998">
    <property type="entry name" value="thiol_BshC"/>
    <property type="match status" value="1"/>
</dbReference>
<dbReference type="Pfam" id="PF24850">
    <property type="entry name" value="CC_BshC"/>
    <property type="match status" value="1"/>
</dbReference>
<dbReference type="Pfam" id="PF10079">
    <property type="entry name" value="Rossmann-like_BshC"/>
    <property type="match status" value="1"/>
</dbReference>
<dbReference type="PIRSF" id="PIRSF012535">
    <property type="entry name" value="UCP012535"/>
    <property type="match status" value="1"/>
</dbReference>
<gene>
    <name evidence="1" type="primary">bshC</name>
    <name type="ordered locus">Plut_0360</name>
</gene>
<accession>Q3B5Y3</accession>
<evidence type="ECO:0000255" key="1">
    <source>
        <dbReference type="HAMAP-Rule" id="MF_01867"/>
    </source>
</evidence>
<sequence>MNTFLLDYNTILTPKKGFPKLFRDYTSEGSQRDSLLGRCFHLDDRKEADYYRQLGLLASRRFQRDSLVDMLQTQNRRFGGGEVREREIEKLRSPRCMAVVTGQQLGLFTGPLYTIYKALSAVVFAERQKALFPEYDFVPVFWLEGEDHDYDEPAHTAIFSGSGLTHFRPETNRRLPDQMVGSTCFDASIQNTLEAFLDMLPPSDYREEVATILRECYFPGNTFEGAFASMLLRLMPKEPLILLSSFDPAFKRMAAGVFTREIETAPASSYNVVAQSSTLEELGYGAQTKPRAVNLFHLNQHGQRQKIEHPSPDLFTLAGESRQYSRHQMLELVSDHPERFSPNVVLRPIVQDTVLPTFAYVAGPGEISYLAQYRRNYEHFGITMPFIVPRGSFTLVEPKISRIMDRMLQVTGRPGFSRKQIYAAVFSDLEGMKKKAVETAENRSLEPLFQEAREEIQRALDRLLPTLSKIDPTLEPMLGASKAQAEKIVENIEQKTWKAGRRKHEELLEQILKAETALFPEGGPQERLLNICYFLNKYGTGLIGTLKEQLQGHSSESHIILEL</sequence>
<feature type="chain" id="PRO_0000378246" description="Putative cysteine ligase BshC">
    <location>
        <begin position="1"/>
        <end position="563"/>
    </location>
</feature>
<feature type="coiled-coil region" evidence="1">
    <location>
        <begin position="498"/>
        <end position="518"/>
    </location>
</feature>
<name>BSHC_CHLL3</name>